<proteinExistence type="evidence at transcript level"/>
<reference key="1">
    <citation type="submission" date="2007-07" db="EMBL/GenBank/DDBJ databases">
        <authorList>
            <consortium name="NIH - Mammalian Gene Collection (MGC) project"/>
        </authorList>
    </citation>
    <scope>NUCLEOTIDE SEQUENCE [LARGE SCALE MRNA]</scope>
    <source>
        <strain>Hereford</strain>
        <tissue>Hypothalamus</tissue>
        <tissue>Thymus</tissue>
    </source>
</reference>
<comment type="function">
    <text evidence="2">Catalytic subunit of tRNA (adenine-N(1)-)-methyltransferase, which catalyzes the formation of N(1)-methyladenine at position 58 (m1A58) in initiator methionyl-tRNA. Catalytic subunit of mRNA N(1)-methyltransferase complex, which mediates methylation of adenosine residues at the N(1) position of a small subset of mRNAs: N(1) methylation takes place in tRNA T-loop-like structures of mRNAs and is only present at low stoichiometries.</text>
</comment>
<comment type="catalytic activity">
    <reaction evidence="3">
        <text>adenosine(58) in tRNA + S-adenosyl-L-methionine = N(1)-methyladenosine(58) in tRNA + S-adenosyl-L-homocysteine + H(+)</text>
        <dbReference type="Rhea" id="RHEA:43152"/>
        <dbReference type="Rhea" id="RHEA-COMP:10365"/>
        <dbReference type="Rhea" id="RHEA-COMP:10366"/>
        <dbReference type="ChEBI" id="CHEBI:15378"/>
        <dbReference type="ChEBI" id="CHEBI:57856"/>
        <dbReference type="ChEBI" id="CHEBI:59789"/>
        <dbReference type="ChEBI" id="CHEBI:74411"/>
        <dbReference type="ChEBI" id="CHEBI:74491"/>
        <dbReference type="EC" id="2.1.1.220"/>
    </reaction>
</comment>
<comment type="catalytic activity">
    <reaction evidence="2">
        <text>an adenosine in mRNA + S-adenosyl-L-methionine = an N(1)-methyladenosine in mRNA + S-adenosyl-L-homocysteine + H(+)</text>
        <dbReference type="Rhea" id="RHEA:55392"/>
        <dbReference type="Rhea" id="RHEA-COMP:12414"/>
        <dbReference type="Rhea" id="RHEA-COMP:12415"/>
        <dbReference type="ChEBI" id="CHEBI:15378"/>
        <dbReference type="ChEBI" id="CHEBI:57856"/>
        <dbReference type="ChEBI" id="CHEBI:59789"/>
        <dbReference type="ChEBI" id="CHEBI:74411"/>
        <dbReference type="ChEBI" id="CHEBI:74491"/>
    </reaction>
</comment>
<comment type="subunit">
    <text evidence="2">Heterotetramer; composed of two copies of TRMT6 and two copies of TRMT61A.</text>
</comment>
<comment type="subcellular location">
    <subcellularLocation>
        <location evidence="1">Nucleus</location>
    </subcellularLocation>
</comment>
<comment type="similarity">
    <text evidence="3">Belongs to the class I-like SAM-binding methyltransferase superfamily. TRM61 family.</text>
</comment>
<gene>
    <name type="primary">TRMT61A</name>
    <name type="synonym">TRM61</name>
</gene>
<organism>
    <name type="scientific">Bos taurus</name>
    <name type="common">Bovine</name>
    <dbReference type="NCBI Taxonomy" id="9913"/>
    <lineage>
        <taxon>Eukaryota</taxon>
        <taxon>Metazoa</taxon>
        <taxon>Chordata</taxon>
        <taxon>Craniata</taxon>
        <taxon>Vertebrata</taxon>
        <taxon>Euteleostomi</taxon>
        <taxon>Mammalia</taxon>
        <taxon>Eutheria</taxon>
        <taxon>Laurasiatheria</taxon>
        <taxon>Artiodactyla</taxon>
        <taxon>Ruminantia</taxon>
        <taxon>Pecora</taxon>
        <taxon>Bovidae</taxon>
        <taxon>Bovinae</taxon>
        <taxon>Bos</taxon>
    </lineage>
</organism>
<sequence length="285" mass="31047">MSFVAYEELIKEGDTAILSLGHGAMVAVRVQRGAQTQTRHGVLRHSVDLIGRPFGSKVTCGRGGWVYVLHPTPELWTLNLPHRTQILYSTDIALLTMMLELRPGSVVCESGTGSGSVSHAIIRTIAPTGHLHTVEFHQQRAERAREEFQEHRVGRWVTVLNQDVCRSGFGVSHVADAVFLDIPSPWEAVGHAWDALKVEGGRFCSFSPCIEQVQRTCQALAACGFSELSTLEVLPQVYNVRTVSLPVPDLGARPGPDAAPFRSGTPMKETVGHTGYLTFATKTPG</sequence>
<feature type="initiator methionine" description="Removed" evidence="2">
    <location>
        <position position="1"/>
    </location>
</feature>
<feature type="chain" id="PRO_0000328540" description="tRNA (adenine(58)-N(1))-methyltransferase catalytic subunit TRMT61A">
    <location>
        <begin position="2"/>
        <end position="285"/>
    </location>
</feature>
<feature type="region of interest" description="Substrate" evidence="2">
    <location>
        <begin position="20"/>
        <end position="22"/>
    </location>
</feature>
<feature type="region of interest" description="Substrate" evidence="2">
    <location>
        <begin position="35"/>
        <end position="42"/>
    </location>
</feature>
<feature type="region of interest" description="Substrate" evidence="2">
    <location>
        <begin position="64"/>
        <end position="65"/>
    </location>
</feature>
<feature type="region of interest" description="Substrate" evidence="2">
    <location>
        <begin position="85"/>
        <end position="89"/>
    </location>
</feature>
<feature type="region of interest" description="Substrate" evidence="2">
    <location>
        <begin position="110"/>
        <end position="117"/>
    </location>
</feature>
<feature type="region of interest" description="Substrate" evidence="2">
    <location>
        <begin position="180"/>
        <end position="183"/>
    </location>
</feature>
<feature type="region of interest" description="Substrate" evidence="2">
    <location>
        <begin position="205"/>
        <end position="212"/>
    </location>
</feature>
<feature type="binding site" evidence="2">
    <location>
        <position position="87"/>
    </location>
    <ligand>
        <name>S-adenosyl-L-methionine</name>
        <dbReference type="ChEBI" id="CHEBI:59789"/>
    </ligand>
</feature>
<feature type="binding site" evidence="2">
    <location>
        <begin position="114"/>
        <end position="116"/>
    </location>
    <ligand>
        <name>S-adenosyl-L-methionine</name>
        <dbReference type="ChEBI" id="CHEBI:59789"/>
    </ligand>
</feature>
<feature type="binding site" evidence="2 3">
    <location>
        <position position="135"/>
    </location>
    <ligand>
        <name>S-adenosyl-L-methionine</name>
        <dbReference type="ChEBI" id="CHEBI:59789"/>
    </ligand>
</feature>
<feature type="binding site" evidence="2">
    <location>
        <position position="140"/>
    </location>
    <ligand>
        <name>S-adenosyl-L-methionine</name>
        <dbReference type="ChEBI" id="CHEBI:59789"/>
    </ligand>
</feature>
<feature type="binding site" evidence="2">
    <location>
        <begin position="163"/>
        <end position="164"/>
    </location>
    <ligand>
        <name>S-adenosyl-L-methionine</name>
        <dbReference type="ChEBI" id="CHEBI:59789"/>
    </ligand>
</feature>
<feature type="binding site" evidence="2 3">
    <location>
        <position position="181"/>
    </location>
    <ligand>
        <name>S-adenosyl-L-methionine</name>
        <dbReference type="ChEBI" id="CHEBI:59789"/>
    </ligand>
</feature>
<feature type="binding site" evidence="2">
    <location>
        <position position="274"/>
    </location>
    <ligand>
        <name>substrate</name>
    </ligand>
</feature>
<feature type="modified residue" description="N-acetylserine" evidence="2">
    <location>
        <position position="2"/>
    </location>
</feature>
<protein>
    <recommendedName>
        <fullName>tRNA (adenine(58)-N(1))-methyltransferase catalytic subunit TRMT61A</fullName>
        <ecNumber evidence="2">2.1.1.220</ecNumber>
    </recommendedName>
    <alternativeName>
        <fullName>mRNA methyladenosine-N(1)-methyltransferase catalytic subunit TRMT61A</fullName>
        <ecNumber evidence="2">2.1.1.-</ecNumber>
    </alternativeName>
    <alternativeName>
        <fullName>tRNA(m1A58)-methyltransferase subunit TRMT61A</fullName>
        <shortName>tRNA(m1A58)MTase subunit TRMT61A</shortName>
    </alternativeName>
</protein>
<keyword id="KW-0007">Acetylation</keyword>
<keyword id="KW-0489">Methyltransferase</keyword>
<keyword id="KW-0539">Nucleus</keyword>
<keyword id="KW-1185">Reference proteome</keyword>
<keyword id="KW-0949">S-adenosyl-L-methionine</keyword>
<keyword id="KW-0808">Transferase</keyword>
<keyword id="KW-0819">tRNA processing</keyword>
<name>TRM61_BOVIN</name>
<dbReference type="EC" id="2.1.1.220" evidence="2"/>
<dbReference type="EC" id="2.1.1.-" evidence="2"/>
<dbReference type="EMBL" id="BC146157">
    <property type="protein sequence ID" value="AAI46158.1"/>
    <property type="molecule type" value="mRNA"/>
</dbReference>
<dbReference type="EMBL" id="BC151461">
    <property type="protein sequence ID" value="AAI51462.1"/>
    <property type="molecule type" value="mRNA"/>
</dbReference>
<dbReference type="RefSeq" id="NP_001092397.1">
    <property type="nucleotide sequence ID" value="NM_001098927.2"/>
</dbReference>
<dbReference type="SMR" id="A6H791"/>
<dbReference type="FunCoup" id="A6H791">
    <property type="interactions" value="1614"/>
</dbReference>
<dbReference type="STRING" id="9913.ENSBTAP00000041889"/>
<dbReference type="PaxDb" id="9913-ENSBTAP00000041889"/>
<dbReference type="GeneID" id="510283"/>
<dbReference type="KEGG" id="bta:510283"/>
<dbReference type="CTD" id="115708"/>
<dbReference type="eggNOG" id="KOG2915">
    <property type="taxonomic scope" value="Eukaryota"/>
</dbReference>
<dbReference type="InParanoid" id="A6H791"/>
<dbReference type="OrthoDB" id="1925287at2759"/>
<dbReference type="Proteomes" id="UP000009136">
    <property type="component" value="Unplaced"/>
</dbReference>
<dbReference type="GO" id="GO:0005634">
    <property type="term" value="C:nucleus"/>
    <property type="evidence" value="ECO:0000318"/>
    <property type="project" value="GO_Central"/>
</dbReference>
<dbReference type="GO" id="GO:0031515">
    <property type="term" value="C:tRNA (m1A) methyltransferase complex"/>
    <property type="evidence" value="ECO:0000318"/>
    <property type="project" value="GO_Central"/>
</dbReference>
<dbReference type="GO" id="GO:0061953">
    <property type="term" value="F:mRNA (adenine-N1-)-methyltransferase activity"/>
    <property type="evidence" value="ECO:0000250"/>
    <property type="project" value="UniProtKB"/>
</dbReference>
<dbReference type="GO" id="GO:0160107">
    <property type="term" value="F:tRNA (adenine(58)-N1)-methyltransferase activity"/>
    <property type="evidence" value="ECO:0007669"/>
    <property type="project" value="UniProtKB-EC"/>
</dbReference>
<dbReference type="GO" id="GO:0006397">
    <property type="term" value="P:mRNA processing"/>
    <property type="evidence" value="ECO:0000250"/>
    <property type="project" value="UniProtKB"/>
</dbReference>
<dbReference type="GO" id="GO:0030488">
    <property type="term" value="P:tRNA methylation"/>
    <property type="evidence" value="ECO:0000318"/>
    <property type="project" value="GO_Central"/>
</dbReference>
<dbReference type="FunFam" id="3.10.330.20:FF:000002">
    <property type="entry name" value="tRNA (adenine(58)-N(1))-methyltransferase catalytic subunit TRMT61A"/>
    <property type="match status" value="1"/>
</dbReference>
<dbReference type="FunFam" id="3.40.50.150:FF:000097">
    <property type="entry name" value="tRNA (adenine(58)-N(1))-methyltransferase catalytic subunit TRMT61A"/>
    <property type="match status" value="1"/>
</dbReference>
<dbReference type="Gene3D" id="3.10.330.20">
    <property type="match status" value="1"/>
</dbReference>
<dbReference type="Gene3D" id="3.40.50.150">
    <property type="entry name" value="Vaccinia Virus protein VP39"/>
    <property type="match status" value="1"/>
</dbReference>
<dbReference type="InterPro" id="IPR029063">
    <property type="entry name" value="SAM-dependent_MTases_sf"/>
</dbReference>
<dbReference type="InterPro" id="IPR049470">
    <property type="entry name" value="TRM61_C"/>
</dbReference>
<dbReference type="InterPro" id="IPR014816">
    <property type="entry name" value="tRNA_MeTrfase_Gcd14"/>
</dbReference>
<dbReference type="PANTHER" id="PTHR12133">
    <property type="entry name" value="TRNA (ADENINE(58)-N(1))-METHYLTRANSFERASE"/>
    <property type="match status" value="1"/>
</dbReference>
<dbReference type="PANTHER" id="PTHR12133:SF2">
    <property type="entry name" value="TRNA (ADENINE(58)-N(1))-METHYLTRANSFERASE CATALYTIC SUBUNIT TRMT61A"/>
    <property type="match status" value="1"/>
</dbReference>
<dbReference type="Pfam" id="PF08704">
    <property type="entry name" value="GCD14"/>
    <property type="match status" value="1"/>
</dbReference>
<dbReference type="PIRSF" id="PIRSF017269">
    <property type="entry name" value="GCD14"/>
    <property type="match status" value="1"/>
</dbReference>
<dbReference type="SUPFAM" id="SSF53335">
    <property type="entry name" value="S-adenosyl-L-methionine-dependent methyltransferases"/>
    <property type="match status" value="1"/>
</dbReference>
<dbReference type="PROSITE" id="PS51620">
    <property type="entry name" value="SAM_TRM61"/>
    <property type="match status" value="1"/>
</dbReference>
<accession>A6H791</accession>
<evidence type="ECO:0000250" key="1">
    <source>
        <dbReference type="UniProtKB" id="P46959"/>
    </source>
</evidence>
<evidence type="ECO:0000250" key="2">
    <source>
        <dbReference type="UniProtKB" id="Q96FX7"/>
    </source>
</evidence>
<evidence type="ECO:0000255" key="3">
    <source>
        <dbReference type="PROSITE-ProRule" id="PRU00952"/>
    </source>
</evidence>